<feature type="signal peptide" evidence="2">
    <location>
        <begin position="1"/>
        <end position="21"/>
    </location>
</feature>
<feature type="propeptide" id="PRO_0000398508" evidence="3">
    <location>
        <begin position="22"/>
        <end position="29"/>
    </location>
</feature>
<feature type="peptide" id="PRO_0000398509" description="U9-theraphotoxin-Cg1a">
    <location>
        <begin position="30"/>
        <end position="75"/>
    </location>
</feature>
<feature type="disulfide bond" evidence="1">
    <location>
        <begin position="31"/>
        <end position="46"/>
    </location>
</feature>
<feature type="disulfide bond" evidence="1">
    <location>
        <begin position="38"/>
        <end position="51"/>
    </location>
</feature>
<feature type="disulfide bond" evidence="1">
    <location>
        <begin position="45"/>
        <end position="58"/>
    </location>
</feature>
<name>JZT49_CHIGU</name>
<protein>
    <recommendedName>
        <fullName>U9-theraphotoxin-Cg1a</fullName>
        <shortName>U9-TRTX-Cg1a</shortName>
    </recommendedName>
    <alternativeName>
        <fullName>Jingzhaotoxin-49</fullName>
        <shortName>JZTX-49</shortName>
    </alternativeName>
    <alternativeName>
        <fullName>Peptide F2-41.53</fullName>
    </alternativeName>
</protein>
<accession>B1P1C7</accession>
<sequence length="75" mass="8259">MKTLVLFIIFGLAALFLLSSANELEETERGCGLLMDACDGKSTFCCSGYNCSPTWKWCVLDCPNLFLLPPTKTLC</sequence>
<reference key="1">
    <citation type="journal article" date="2008" name="Cell. Mol. Life Sci.">
        <title>Molecular diversity and evolution of cystine knot toxins of the tarantula Chilobrachys jingzhao.</title>
        <authorList>
            <person name="Chen J."/>
            <person name="Deng M."/>
            <person name="He Q."/>
            <person name="Meng E."/>
            <person name="Jiang L."/>
            <person name="Liao Z."/>
            <person name="Rong M."/>
            <person name="Liang S."/>
        </authorList>
    </citation>
    <scope>NUCLEOTIDE SEQUENCE [LARGE SCALE MRNA]</scope>
    <source>
        <tissue>Venom gland</tissue>
    </source>
</reference>
<reference key="2">
    <citation type="journal article" date="2007" name="Proteomics">
        <title>Proteomic and peptidomic analysis of the venom from Chinese tarantula Chilobrachys jingzhao.</title>
        <authorList>
            <person name="Liao Z."/>
            <person name="Cao J."/>
            <person name="Li S."/>
            <person name="Yan X."/>
            <person name="Hu W."/>
            <person name="He Q."/>
            <person name="Chen J."/>
            <person name="Tang J."/>
            <person name="Xie J."/>
            <person name="Liang S."/>
        </authorList>
    </citation>
    <scope>PROTEIN SEQUENCE OF 30-75</scope>
    <scope>IDENTIFICATION BY MASS SPECTROMETRY</scope>
    <source>
        <tissue>Venom</tissue>
    </source>
</reference>
<keyword id="KW-0903">Direct protein sequencing</keyword>
<keyword id="KW-1015">Disulfide bond</keyword>
<keyword id="KW-0872">Ion channel impairing toxin</keyword>
<keyword id="KW-0960">Knottin</keyword>
<keyword id="KW-0964">Secreted</keyword>
<keyword id="KW-0732">Signal</keyword>
<keyword id="KW-0800">Toxin</keyword>
<comment type="function">
    <text>Probable ion channel inhibitor.</text>
</comment>
<comment type="subcellular location">
    <subcellularLocation>
        <location>Secreted</location>
    </subcellularLocation>
</comment>
<comment type="tissue specificity">
    <text>Expressed by the venom gland.</text>
</comment>
<comment type="domain">
    <text evidence="1">The presence of a 'disulfide through disulfide knot' structurally defines this protein as a knottin.</text>
</comment>
<comment type="similarity">
    <text evidence="4">Belongs to the neurotoxin 10 (Hwtx-1) family. 43 (Jztx-49) subfamily.</text>
</comment>
<organism>
    <name type="scientific">Chilobrachys guangxiensis</name>
    <name type="common">Chinese earth tiger tarantula</name>
    <name type="synonym">Chilobrachys jingzhao</name>
    <dbReference type="NCBI Taxonomy" id="278060"/>
    <lineage>
        <taxon>Eukaryota</taxon>
        <taxon>Metazoa</taxon>
        <taxon>Ecdysozoa</taxon>
        <taxon>Arthropoda</taxon>
        <taxon>Chelicerata</taxon>
        <taxon>Arachnida</taxon>
        <taxon>Araneae</taxon>
        <taxon>Mygalomorphae</taxon>
        <taxon>Theraphosidae</taxon>
        <taxon>Chilobrachys</taxon>
    </lineage>
</organism>
<dbReference type="EMBL" id="EU233858">
    <property type="protein sequence ID" value="ABY71677.1"/>
    <property type="molecule type" value="mRNA"/>
</dbReference>
<dbReference type="SMR" id="B1P1C7"/>
<dbReference type="ArachnoServer" id="AS000806">
    <property type="toxin name" value="U9-theraphotoxin-Cg1a"/>
</dbReference>
<dbReference type="GO" id="GO:0005576">
    <property type="term" value="C:extracellular region"/>
    <property type="evidence" value="ECO:0007669"/>
    <property type="project" value="UniProtKB-SubCell"/>
</dbReference>
<dbReference type="GO" id="GO:0008200">
    <property type="term" value="F:ion channel inhibitor activity"/>
    <property type="evidence" value="ECO:0007669"/>
    <property type="project" value="InterPro"/>
</dbReference>
<dbReference type="GO" id="GO:0090729">
    <property type="term" value="F:toxin activity"/>
    <property type="evidence" value="ECO:0007669"/>
    <property type="project" value="UniProtKB-KW"/>
</dbReference>
<dbReference type="InterPro" id="IPR011696">
    <property type="entry name" value="Huwentoxin-1"/>
</dbReference>
<dbReference type="InterPro" id="IPR013140">
    <property type="entry name" value="Huwentoxin_CS1"/>
</dbReference>
<dbReference type="Pfam" id="PF07740">
    <property type="entry name" value="Toxin_12"/>
    <property type="match status" value="1"/>
</dbReference>
<dbReference type="SUPFAM" id="SSF57059">
    <property type="entry name" value="omega toxin-like"/>
    <property type="match status" value="1"/>
</dbReference>
<dbReference type="PROSITE" id="PS60021">
    <property type="entry name" value="HWTX_1"/>
    <property type="match status" value="1"/>
</dbReference>
<evidence type="ECO:0000250" key="1"/>
<evidence type="ECO:0000255" key="2"/>
<evidence type="ECO:0000269" key="3">
    <source>
    </source>
</evidence>
<evidence type="ECO:0000305" key="4"/>
<proteinExistence type="evidence at protein level"/>